<reference key="1">
    <citation type="journal article" date="2008" name="J. Bacteriol.">
        <title>The pangenome structure of Escherichia coli: comparative genomic analysis of E. coli commensal and pathogenic isolates.</title>
        <authorList>
            <person name="Rasko D.A."/>
            <person name="Rosovitz M.J."/>
            <person name="Myers G.S.A."/>
            <person name="Mongodin E.F."/>
            <person name="Fricke W.F."/>
            <person name="Gajer P."/>
            <person name="Crabtree J."/>
            <person name="Sebaihia M."/>
            <person name="Thomson N.R."/>
            <person name="Chaudhuri R."/>
            <person name="Henderson I.R."/>
            <person name="Sperandio V."/>
            <person name="Ravel J."/>
        </authorList>
    </citation>
    <scope>NUCLEOTIDE SEQUENCE [LARGE SCALE GENOMIC DNA]</scope>
    <source>
        <strain>HS</strain>
    </source>
</reference>
<comment type="function">
    <text evidence="1">Catalyzes the reversible reaction in which hydroxymethyl group from 5,10-methylenetetrahydrofolate is transferred onto alpha-ketoisovalerate to form ketopantoate.</text>
</comment>
<comment type="catalytic activity">
    <reaction evidence="1">
        <text>3-methyl-2-oxobutanoate + (6R)-5,10-methylene-5,6,7,8-tetrahydrofolate + H2O = 2-dehydropantoate + (6S)-5,6,7,8-tetrahydrofolate</text>
        <dbReference type="Rhea" id="RHEA:11824"/>
        <dbReference type="ChEBI" id="CHEBI:11561"/>
        <dbReference type="ChEBI" id="CHEBI:11851"/>
        <dbReference type="ChEBI" id="CHEBI:15377"/>
        <dbReference type="ChEBI" id="CHEBI:15636"/>
        <dbReference type="ChEBI" id="CHEBI:57453"/>
        <dbReference type="EC" id="2.1.2.11"/>
    </reaction>
</comment>
<comment type="cofactor">
    <cofactor evidence="1">
        <name>Mg(2+)</name>
        <dbReference type="ChEBI" id="CHEBI:18420"/>
    </cofactor>
    <text evidence="1">Binds 1 Mg(2+) ion per subunit.</text>
</comment>
<comment type="pathway">
    <text evidence="1">Cofactor biosynthesis; (R)-pantothenate biosynthesis; (R)-pantoate from 3-methyl-2-oxobutanoate: step 1/2.</text>
</comment>
<comment type="subunit">
    <text evidence="1">Homodecamer; pentamer of dimers.</text>
</comment>
<comment type="subcellular location">
    <subcellularLocation>
        <location evidence="1">Cytoplasm</location>
    </subcellularLocation>
</comment>
<comment type="similarity">
    <text evidence="1">Belongs to the PanB family.</text>
</comment>
<gene>
    <name evidence="1" type="primary">panB</name>
    <name type="ordered locus">EcHS_A0138</name>
</gene>
<accession>A7ZW83</accession>
<proteinExistence type="inferred from homology"/>
<sequence>MKPTTIASLQKCKQDKKRFATITAYDYSFAKLFADEGLNVMLVGDSLGMTVQGHDSTLPVTVEDIAYHTAAVRRGAPNCLLLADLPFMAYATPEQAFENAATVMRAGANMVKIEGGEWLVETVKMLTERAVPVCGHLGLTPQSVNIFGGYKVQGRGDEAGDQLLSDALALEAAGAQLLVLECVPVELAKRITEALAIPVIGIGAGNVTDGQILVMHDAFGITGGHIPKFAKNFLAETGDIRAAVRQYMAEVESGVYPGEEHSFH</sequence>
<organism>
    <name type="scientific">Escherichia coli O9:H4 (strain HS)</name>
    <dbReference type="NCBI Taxonomy" id="331112"/>
    <lineage>
        <taxon>Bacteria</taxon>
        <taxon>Pseudomonadati</taxon>
        <taxon>Pseudomonadota</taxon>
        <taxon>Gammaproteobacteria</taxon>
        <taxon>Enterobacterales</taxon>
        <taxon>Enterobacteriaceae</taxon>
        <taxon>Escherichia</taxon>
    </lineage>
</organism>
<protein>
    <recommendedName>
        <fullName evidence="1">3-methyl-2-oxobutanoate hydroxymethyltransferase</fullName>
        <ecNumber evidence="1">2.1.2.11</ecNumber>
    </recommendedName>
    <alternativeName>
        <fullName evidence="1">Ketopantoate hydroxymethyltransferase</fullName>
        <shortName evidence="1">KPHMT</shortName>
    </alternativeName>
</protein>
<dbReference type="EC" id="2.1.2.11" evidence="1"/>
<dbReference type="EMBL" id="CP000802">
    <property type="protein sequence ID" value="ABV04537.1"/>
    <property type="molecule type" value="Genomic_DNA"/>
</dbReference>
<dbReference type="RefSeq" id="WP_000805455.1">
    <property type="nucleotide sequence ID" value="NC_009800.1"/>
</dbReference>
<dbReference type="SMR" id="A7ZW83"/>
<dbReference type="KEGG" id="ecx:EcHS_A0138"/>
<dbReference type="HOGENOM" id="CLU_036645_1_0_6"/>
<dbReference type="UniPathway" id="UPA00028">
    <property type="reaction ID" value="UER00003"/>
</dbReference>
<dbReference type="GO" id="GO:0005737">
    <property type="term" value="C:cytoplasm"/>
    <property type="evidence" value="ECO:0007669"/>
    <property type="project" value="UniProtKB-SubCell"/>
</dbReference>
<dbReference type="GO" id="GO:0003864">
    <property type="term" value="F:3-methyl-2-oxobutanoate hydroxymethyltransferase activity"/>
    <property type="evidence" value="ECO:0007669"/>
    <property type="project" value="UniProtKB-UniRule"/>
</dbReference>
<dbReference type="GO" id="GO:0000287">
    <property type="term" value="F:magnesium ion binding"/>
    <property type="evidence" value="ECO:0007669"/>
    <property type="project" value="TreeGrafter"/>
</dbReference>
<dbReference type="GO" id="GO:0015940">
    <property type="term" value="P:pantothenate biosynthetic process"/>
    <property type="evidence" value="ECO:0007669"/>
    <property type="project" value="UniProtKB-UniRule"/>
</dbReference>
<dbReference type="CDD" id="cd06557">
    <property type="entry name" value="KPHMT-like"/>
    <property type="match status" value="1"/>
</dbReference>
<dbReference type="FunFam" id="3.20.20.60:FF:000003">
    <property type="entry name" value="3-methyl-2-oxobutanoate hydroxymethyltransferase"/>
    <property type="match status" value="1"/>
</dbReference>
<dbReference type="Gene3D" id="3.20.20.60">
    <property type="entry name" value="Phosphoenolpyruvate-binding domains"/>
    <property type="match status" value="1"/>
</dbReference>
<dbReference type="HAMAP" id="MF_00156">
    <property type="entry name" value="PanB"/>
    <property type="match status" value="1"/>
</dbReference>
<dbReference type="InterPro" id="IPR003700">
    <property type="entry name" value="Pantoate_hydroxy_MeTrfase"/>
</dbReference>
<dbReference type="InterPro" id="IPR015813">
    <property type="entry name" value="Pyrv/PenolPyrv_kinase-like_dom"/>
</dbReference>
<dbReference type="InterPro" id="IPR040442">
    <property type="entry name" value="Pyrv_kinase-like_dom_sf"/>
</dbReference>
<dbReference type="NCBIfam" id="TIGR00222">
    <property type="entry name" value="panB"/>
    <property type="match status" value="1"/>
</dbReference>
<dbReference type="NCBIfam" id="NF001452">
    <property type="entry name" value="PRK00311.1"/>
    <property type="match status" value="1"/>
</dbReference>
<dbReference type="PANTHER" id="PTHR20881">
    <property type="entry name" value="3-METHYL-2-OXOBUTANOATE HYDROXYMETHYLTRANSFERASE"/>
    <property type="match status" value="1"/>
</dbReference>
<dbReference type="PANTHER" id="PTHR20881:SF0">
    <property type="entry name" value="3-METHYL-2-OXOBUTANOATE HYDROXYMETHYLTRANSFERASE"/>
    <property type="match status" value="1"/>
</dbReference>
<dbReference type="Pfam" id="PF02548">
    <property type="entry name" value="Pantoate_transf"/>
    <property type="match status" value="1"/>
</dbReference>
<dbReference type="PIRSF" id="PIRSF000388">
    <property type="entry name" value="Pantoate_hydroxy_MeTrfase"/>
    <property type="match status" value="1"/>
</dbReference>
<dbReference type="SUPFAM" id="SSF51621">
    <property type="entry name" value="Phosphoenolpyruvate/pyruvate domain"/>
    <property type="match status" value="1"/>
</dbReference>
<name>PANB_ECOHS</name>
<feature type="chain" id="PRO_1000058183" description="3-methyl-2-oxobutanoate hydroxymethyltransferase">
    <location>
        <begin position="1"/>
        <end position="264"/>
    </location>
</feature>
<feature type="active site" description="Proton acceptor" evidence="1">
    <location>
        <position position="181"/>
    </location>
</feature>
<feature type="binding site" evidence="1">
    <location>
        <begin position="45"/>
        <end position="46"/>
    </location>
    <ligand>
        <name>3-methyl-2-oxobutanoate</name>
        <dbReference type="ChEBI" id="CHEBI:11851"/>
    </ligand>
</feature>
<feature type="binding site" evidence="1">
    <location>
        <position position="45"/>
    </location>
    <ligand>
        <name>Mg(2+)</name>
        <dbReference type="ChEBI" id="CHEBI:18420"/>
    </ligand>
</feature>
<feature type="binding site" evidence="1">
    <location>
        <position position="84"/>
    </location>
    <ligand>
        <name>3-methyl-2-oxobutanoate</name>
        <dbReference type="ChEBI" id="CHEBI:11851"/>
    </ligand>
</feature>
<feature type="binding site" evidence="1">
    <location>
        <position position="84"/>
    </location>
    <ligand>
        <name>Mg(2+)</name>
        <dbReference type="ChEBI" id="CHEBI:18420"/>
    </ligand>
</feature>
<feature type="binding site" evidence="1">
    <location>
        <position position="112"/>
    </location>
    <ligand>
        <name>3-methyl-2-oxobutanoate</name>
        <dbReference type="ChEBI" id="CHEBI:11851"/>
    </ligand>
</feature>
<feature type="binding site" evidence="1">
    <location>
        <position position="114"/>
    </location>
    <ligand>
        <name>Mg(2+)</name>
        <dbReference type="ChEBI" id="CHEBI:18420"/>
    </ligand>
</feature>
<evidence type="ECO:0000255" key="1">
    <source>
        <dbReference type="HAMAP-Rule" id="MF_00156"/>
    </source>
</evidence>
<keyword id="KW-0963">Cytoplasm</keyword>
<keyword id="KW-0460">Magnesium</keyword>
<keyword id="KW-0479">Metal-binding</keyword>
<keyword id="KW-0566">Pantothenate biosynthesis</keyword>
<keyword id="KW-0808">Transferase</keyword>